<gene>
    <name evidence="1" type="primary">infA</name>
    <name type="ordered locus">MYPU_5650</name>
</gene>
<comment type="function">
    <text evidence="1">One of the essential components for the initiation of protein synthesis. Stabilizes the binding of IF-2 and IF-3 on the 30S subunit to which N-formylmethionyl-tRNA(fMet) subsequently binds. Helps modulate mRNA selection, yielding the 30S pre-initiation complex (PIC). Upon addition of the 50S ribosomal subunit IF-1, IF-2 and IF-3 are released leaving the mature 70S translation initiation complex.</text>
</comment>
<comment type="subunit">
    <text evidence="1">Component of the 30S ribosomal translation pre-initiation complex which assembles on the 30S ribosome in the order IF-2 and IF-3, IF-1 and N-formylmethionyl-tRNA(fMet); mRNA recruitment can occur at any time during PIC assembly.</text>
</comment>
<comment type="subcellular location">
    <subcellularLocation>
        <location evidence="1">Cytoplasm</location>
    </subcellularLocation>
</comment>
<comment type="similarity">
    <text evidence="1">Belongs to the IF-1 family.</text>
</comment>
<keyword id="KW-0963">Cytoplasm</keyword>
<keyword id="KW-0396">Initiation factor</keyword>
<keyword id="KW-0648">Protein biosynthesis</keyword>
<keyword id="KW-1185">Reference proteome</keyword>
<keyword id="KW-0694">RNA-binding</keyword>
<keyword id="KW-0699">rRNA-binding</keyword>
<accession>Q98Q04</accession>
<protein>
    <recommendedName>
        <fullName evidence="1">Translation initiation factor IF-1</fullName>
    </recommendedName>
</protein>
<proteinExistence type="inferred from homology"/>
<sequence>MSDKSIKMQAKVLKMFSTDKYELELLENKVIIKGHISGKMRIHKIRILPGDIVDVEISPHDLSNGRITYRHK</sequence>
<evidence type="ECO:0000255" key="1">
    <source>
        <dbReference type="HAMAP-Rule" id="MF_00075"/>
    </source>
</evidence>
<dbReference type="EMBL" id="AL445565">
    <property type="protein sequence ID" value="CAC13738.1"/>
    <property type="molecule type" value="Genomic_DNA"/>
</dbReference>
<dbReference type="PIR" id="E90582">
    <property type="entry name" value="E90582"/>
</dbReference>
<dbReference type="RefSeq" id="WP_010925366.1">
    <property type="nucleotide sequence ID" value="NC_002771.1"/>
</dbReference>
<dbReference type="SMR" id="Q98Q04"/>
<dbReference type="STRING" id="272635.gene:17577172"/>
<dbReference type="KEGG" id="mpu:MYPU_5650"/>
<dbReference type="eggNOG" id="COG0361">
    <property type="taxonomic scope" value="Bacteria"/>
</dbReference>
<dbReference type="HOGENOM" id="CLU_151267_1_0_14"/>
<dbReference type="BioCyc" id="MPUL272635:G1GT6-578-MONOMER"/>
<dbReference type="Proteomes" id="UP000000528">
    <property type="component" value="Chromosome"/>
</dbReference>
<dbReference type="GO" id="GO:0005829">
    <property type="term" value="C:cytosol"/>
    <property type="evidence" value="ECO:0007669"/>
    <property type="project" value="TreeGrafter"/>
</dbReference>
<dbReference type="GO" id="GO:0043022">
    <property type="term" value="F:ribosome binding"/>
    <property type="evidence" value="ECO:0007669"/>
    <property type="project" value="UniProtKB-UniRule"/>
</dbReference>
<dbReference type="GO" id="GO:0019843">
    <property type="term" value="F:rRNA binding"/>
    <property type="evidence" value="ECO:0007669"/>
    <property type="project" value="UniProtKB-UniRule"/>
</dbReference>
<dbReference type="GO" id="GO:0003743">
    <property type="term" value="F:translation initiation factor activity"/>
    <property type="evidence" value="ECO:0007669"/>
    <property type="project" value="UniProtKB-UniRule"/>
</dbReference>
<dbReference type="CDD" id="cd04451">
    <property type="entry name" value="S1_IF1"/>
    <property type="match status" value="1"/>
</dbReference>
<dbReference type="Gene3D" id="2.40.50.140">
    <property type="entry name" value="Nucleic acid-binding proteins"/>
    <property type="match status" value="1"/>
</dbReference>
<dbReference type="HAMAP" id="MF_00075">
    <property type="entry name" value="IF_1"/>
    <property type="match status" value="1"/>
</dbReference>
<dbReference type="InterPro" id="IPR012340">
    <property type="entry name" value="NA-bd_OB-fold"/>
</dbReference>
<dbReference type="InterPro" id="IPR006196">
    <property type="entry name" value="RNA-binding_domain_S1_IF1"/>
</dbReference>
<dbReference type="InterPro" id="IPR004368">
    <property type="entry name" value="TIF_IF1"/>
</dbReference>
<dbReference type="NCBIfam" id="TIGR00008">
    <property type="entry name" value="infA"/>
    <property type="match status" value="1"/>
</dbReference>
<dbReference type="PANTHER" id="PTHR33370">
    <property type="entry name" value="TRANSLATION INITIATION FACTOR IF-1, CHLOROPLASTIC"/>
    <property type="match status" value="1"/>
</dbReference>
<dbReference type="PANTHER" id="PTHR33370:SF1">
    <property type="entry name" value="TRANSLATION INITIATION FACTOR IF-1, CHLOROPLASTIC"/>
    <property type="match status" value="1"/>
</dbReference>
<dbReference type="Pfam" id="PF01176">
    <property type="entry name" value="eIF-1a"/>
    <property type="match status" value="1"/>
</dbReference>
<dbReference type="SUPFAM" id="SSF50249">
    <property type="entry name" value="Nucleic acid-binding proteins"/>
    <property type="match status" value="1"/>
</dbReference>
<dbReference type="PROSITE" id="PS50832">
    <property type="entry name" value="S1_IF1_TYPE"/>
    <property type="match status" value="1"/>
</dbReference>
<reference key="1">
    <citation type="journal article" date="2001" name="Nucleic Acids Res.">
        <title>The complete genome sequence of the murine respiratory pathogen Mycoplasma pulmonis.</title>
        <authorList>
            <person name="Chambaud I."/>
            <person name="Heilig R."/>
            <person name="Ferris S."/>
            <person name="Barbe V."/>
            <person name="Samson D."/>
            <person name="Galisson F."/>
            <person name="Moszer I."/>
            <person name="Dybvig K."/>
            <person name="Wroblewski H."/>
            <person name="Viari A."/>
            <person name="Rocha E.P.C."/>
            <person name="Blanchard A."/>
        </authorList>
    </citation>
    <scope>NUCLEOTIDE SEQUENCE [LARGE SCALE GENOMIC DNA]</scope>
    <source>
        <strain>UAB CTIP</strain>
    </source>
</reference>
<name>IF1_MYCPU</name>
<organism>
    <name type="scientific">Mycoplasmopsis pulmonis (strain UAB CTIP)</name>
    <name type="common">Mycoplasma pulmonis</name>
    <dbReference type="NCBI Taxonomy" id="272635"/>
    <lineage>
        <taxon>Bacteria</taxon>
        <taxon>Bacillati</taxon>
        <taxon>Mycoplasmatota</taxon>
        <taxon>Mycoplasmoidales</taxon>
        <taxon>Metamycoplasmataceae</taxon>
        <taxon>Mycoplasmopsis</taxon>
    </lineage>
</organism>
<feature type="chain" id="PRO_0000095826" description="Translation initiation factor IF-1">
    <location>
        <begin position="1"/>
        <end position="72"/>
    </location>
</feature>
<feature type="domain" description="S1-like" evidence="1">
    <location>
        <begin position="1"/>
        <end position="72"/>
    </location>
</feature>